<keyword id="KW-0349">Heme</keyword>
<keyword id="KW-0408">Iron</keyword>
<keyword id="KW-0479">Metal-binding</keyword>
<keyword id="KW-0561">Oxygen transport</keyword>
<keyword id="KW-0813">Transport</keyword>
<proteinExistence type="evidence at transcript level"/>
<dbReference type="EMBL" id="M15757">
    <property type="protein sequence ID" value="AAA36824.1"/>
    <property type="molecule type" value="Genomic_DNA"/>
</dbReference>
<dbReference type="SMR" id="P08225"/>
<dbReference type="GO" id="GO:0072562">
    <property type="term" value="C:blood microparticle"/>
    <property type="evidence" value="ECO:0007669"/>
    <property type="project" value="TreeGrafter"/>
</dbReference>
<dbReference type="GO" id="GO:0031838">
    <property type="term" value="C:haptoglobin-hemoglobin complex"/>
    <property type="evidence" value="ECO:0007669"/>
    <property type="project" value="TreeGrafter"/>
</dbReference>
<dbReference type="GO" id="GO:0005833">
    <property type="term" value="C:hemoglobin complex"/>
    <property type="evidence" value="ECO:0007669"/>
    <property type="project" value="InterPro"/>
</dbReference>
<dbReference type="GO" id="GO:0031720">
    <property type="term" value="F:haptoglobin binding"/>
    <property type="evidence" value="ECO:0007669"/>
    <property type="project" value="TreeGrafter"/>
</dbReference>
<dbReference type="GO" id="GO:0020037">
    <property type="term" value="F:heme binding"/>
    <property type="evidence" value="ECO:0007669"/>
    <property type="project" value="InterPro"/>
</dbReference>
<dbReference type="GO" id="GO:0031721">
    <property type="term" value="F:hemoglobin alpha binding"/>
    <property type="evidence" value="ECO:0007669"/>
    <property type="project" value="TreeGrafter"/>
</dbReference>
<dbReference type="GO" id="GO:0046872">
    <property type="term" value="F:metal ion binding"/>
    <property type="evidence" value="ECO:0007669"/>
    <property type="project" value="UniProtKB-KW"/>
</dbReference>
<dbReference type="GO" id="GO:0043177">
    <property type="term" value="F:organic acid binding"/>
    <property type="evidence" value="ECO:0007669"/>
    <property type="project" value="TreeGrafter"/>
</dbReference>
<dbReference type="GO" id="GO:0019825">
    <property type="term" value="F:oxygen binding"/>
    <property type="evidence" value="ECO:0007669"/>
    <property type="project" value="InterPro"/>
</dbReference>
<dbReference type="GO" id="GO:0005344">
    <property type="term" value="F:oxygen carrier activity"/>
    <property type="evidence" value="ECO:0007669"/>
    <property type="project" value="UniProtKB-KW"/>
</dbReference>
<dbReference type="GO" id="GO:0004601">
    <property type="term" value="F:peroxidase activity"/>
    <property type="evidence" value="ECO:0007669"/>
    <property type="project" value="TreeGrafter"/>
</dbReference>
<dbReference type="GO" id="GO:0042744">
    <property type="term" value="P:hydrogen peroxide catabolic process"/>
    <property type="evidence" value="ECO:0007669"/>
    <property type="project" value="TreeGrafter"/>
</dbReference>
<dbReference type="CDD" id="cd08925">
    <property type="entry name" value="Hb-beta-like"/>
    <property type="match status" value="1"/>
</dbReference>
<dbReference type="FunFam" id="1.10.490.10:FF:000001">
    <property type="entry name" value="Hemoglobin subunit beta"/>
    <property type="match status" value="1"/>
</dbReference>
<dbReference type="Gene3D" id="1.10.490.10">
    <property type="entry name" value="Globins"/>
    <property type="match status" value="1"/>
</dbReference>
<dbReference type="InterPro" id="IPR000971">
    <property type="entry name" value="Globin"/>
</dbReference>
<dbReference type="InterPro" id="IPR009050">
    <property type="entry name" value="Globin-like_sf"/>
</dbReference>
<dbReference type="InterPro" id="IPR012292">
    <property type="entry name" value="Globin/Proto"/>
</dbReference>
<dbReference type="InterPro" id="IPR002337">
    <property type="entry name" value="Hemoglobin_b"/>
</dbReference>
<dbReference type="InterPro" id="IPR050056">
    <property type="entry name" value="Hemoglobin_oxygen_transport"/>
</dbReference>
<dbReference type="PANTHER" id="PTHR11442">
    <property type="entry name" value="HEMOGLOBIN FAMILY MEMBER"/>
    <property type="match status" value="1"/>
</dbReference>
<dbReference type="PANTHER" id="PTHR11442:SF52">
    <property type="entry name" value="HEMOGLOBIN SUBUNIT GAMMA-1"/>
    <property type="match status" value="1"/>
</dbReference>
<dbReference type="Pfam" id="PF00042">
    <property type="entry name" value="Globin"/>
    <property type="match status" value="1"/>
</dbReference>
<dbReference type="PRINTS" id="PR00814">
    <property type="entry name" value="BETAHAEM"/>
</dbReference>
<dbReference type="SUPFAM" id="SSF46458">
    <property type="entry name" value="Globin-like"/>
    <property type="match status" value="1"/>
</dbReference>
<dbReference type="PROSITE" id="PS01033">
    <property type="entry name" value="GLOBIN"/>
    <property type="match status" value="1"/>
</dbReference>
<accession>P08225</accession>
<gene>
    <name type="primary">HBG</name>
</gene>
<evidence type="ECO:0000255" key="1">
    <source>
        <dbReference type="PROSITE-ProRule" id="PRU00238"/>
    </source>
</evidence>
<reference key="1">
    <citation type="journal article" date="1986" name="Mol. Biol. Evol.">
        <title>Nucleotide sequence analysis of the lemur beta-globin gene family: evidence for major rate fluctuations in globin polypeptide evolution.</title>
        <authorList>
            <person name="Harris S."/>
            <person name="Thackeray J.R."/>
            <person name="Jeffreys A.J."/>
            <person name="Weiss M.L."/>
        </authorList>
    </citation>
    <scope>NUCLEOTIDE SEQUENCE [GENOMIC DNA]</scope>
</reference>
<feature type="chain" id="PRO_0000053249" description="Hemoglobin subunit gamma">
    <location>
        <begin position="1"/>
        <end position="147"/>
    </location>
</feature>
<feature type="domain" description="Globin" evidence="1">
    <location>
        <begin position="3"/>
        <end position="147"/>
    </location>
</feature>
<feature type="binding site" description="distal binding residue" evidence="1">
    <location>
        <position position="64"/>
    </location>
    <ligand>
        <name>heme b</name>
        <dbReference type="ChEBI" id="CHEBI:60344"/>
    </ligand>
    <ligandPart>
        <name>Fe</name>
        <dbReference type="ChEBI" id="CHEBI:18248"/>
    </ligandPart>
</feature>
<feature type="binding site" description="proximal binding residue" evidence="1">
    <location>
        <position position="93"/>
    </location>
    <ligand>
        <name>heme b</name>
        <dbReference type="ChEBI" id="CHEBI:60344"/>
    </ligand>
    <ligandPart>
        <name>Fe</name>
        <dbReference type="ChEBI" id="CHEBI:18248"/>
    </ligandPart>
</feature>
<comment type="function">
    <text>Gamma chains make up the fetal hemoglobin F, in combination with alpha chains.</text>
</comment>
<comment type="subunit">
    <text>Heterotetramer of two alpha chains and two gamma chains in fetal hemoglobin (Hb F).</text>
</comment>
<comment type="tissue specificity">
    <text>Red blood cells.</text>
</comment>
<comment type="similarity">
    <text evidence="1">Belongs to the globin family.</text>
</comment>
<name>HBG_EULFU</name>
<organism>
    <name type="scientific">Eulemur fulvus fulvus</name>
    <name type="common">Brown lemur</name>
    <dbReference type="NCBI Taxonomy" id="40322"/>
    <lineage>
        <taxon>Eukaryota</taxon>
        <taxon>Metazoa</taxon>
        <taxon>Chordata</taxon>
        <taxon>Craniata</taxon>
        <taxon>Vertebrata</taxon>
        <taxon>Euteleostomi</taxon>
        <taxon>Mammalia</taxon>
        <taxon>Eutheria</taxon>
        <taxon>Euarchontoglires</taxon>
        <taxon>Primates</taxon>
        <taxon>Strepsirrhini</taxon>
        <taxon>Lemuriformes</taxon>
        <taxon>Lemuridae</taxon>
        <taxon>Eulemur</taxon>
    </lineage>
</organism>
<protein>
    <recommendedName>
        <fullName>Hemoglobin subunit gamma</fullName>
    </recommendedName>
    <alternativeName>
        <fullName>Gamma-globin</fullName>
    </alternativeName>
    <alternativeName>
        <fullName>Hemoglobin gamma chain</fullName>
    </alternativeName>
</protein>
<sequence length="147" mass="16234">MVHFTAEEKAVITSLWGKVNVEEAGGEALGRLLVVYPWTQRFFDNFGNLSSASAIMGNPKVKAHGKKVLTSLGDAIKNMDDLKGTFAHLSELHCDRLHVDPENFKLLGNELVIVLAKYFGKEFTPQVQAAWQKMVAGVAIALAHKYH</sequence>